<name>AROK_CLOBK</name>
<comment type="function">
    <text evidence="1">Catalyzes the specific phosphorylation of the 3-hydroxyl group of shikimic acid using ATP as a cosubstrate.</text>
</comment>
<comment type="catalytic activity">
    <reaction evidence="1">
        <text>shikimate + ATP = 3-phosphoshikimate + ADP + H(+)</text>
        <dbReference type="Rhea" id="RHEA:13121"/>
        <dbReference type="ChEBI" id="CHEBI:15378"/>
        <dbReference type="ChEBI" id="CHEBI:30616"/>
        <dbReference type="ChEBI" id="CHEBI:36208"/>
        <dbReference type="ChEBI" id="CHEBI:145989"/>
        <dbReference type="ChEBI" id="CHEBI:456216"/>
        <dbReference type="EC" id="2.7.1.71"/>
    </reaction>
</comment>
<comment type="cofactor">
    <cofactor evidence="1">
        <name>Mg(2+)</name>
        <dbReference type="ChEBI" id="CHEBI:18420"/>
    </cofactor>
    <text evidence="1">Binds 1 Mg(2+) ion per subunit.</text>
</comment>
<comment type="pathway">
    <text evidence="1">Metabolic intermediate biosynthesis; chorismate biosynthesis; chorismate from D-erythrose 4-phosphate and phosphoenolpyruvate: step 5/7.</text>
</comment>
<comment type="subunit">
    <text evidence="1">Monomer.</text>
</comment>
<comment type="subcellular location">
    <subcellularLocation>
        <location evidence="1">Cytoplasm</location>
    </subcellularLocation>
</comment>
<comment type="similarity">
    <text evidence="1">Belongs to the shikimate kinase family.</text>
</comment>
<dbReference type="EC" id="2.7.1.71" evidence="1"/>
<dbReference type="EMBL" id="CP000939">
    <property type="protein sequence ID" value="ACA46885.1"/>
    <property type="molecule type" value="Genomic_DNA"/>
</dbReference>
<dbReference type="RefSeq" id="WP_004451836.1">
    <property type="nucleotide sequence ID" value="NC_010516.1"/>
</dbReference>
<dbReference type="SMR" id="B1IMQ2"/>
<dbReference type="KEGG" id="cbb:CLD_2738"/>
<dbReference type="HOGENOM" id="CLU_057607_4_0_9"/>
<dbReference type="UniPathway" id="UPA00053">
    <property type="reaction ID" value="UER00088"/>
</dbReference>
<dbReference type="Proteomes" id="UP000008541">
    <property type="component" value="Chromosome"/>
</dbReference>
<dbReference type="GO" id="GO:0005829">
    <property type="term" value="C:cytosol"/>
    <property type="evidence" value="ECO:0007669"/>
    <property type="project" value="TreeGrafter"/>
</dbReference>
<dbReference type="GO" id="GO:0005524">
    <property type="term" value="F:ATP binding"/>
    <property type="evidence" value="ECO:0007669"/>
    <property type="project" value="UniProtKB-UniRule"/>
</dbReference>
<dbReference type="GO" id="GO:0000287">
    <property type="term" value="F:magnesium ion binding"/>
    <property type="evidence" value="ECO:0007669"/>
    <property type="project" value="UniProtKB-UniRule"/>
</dbReference>
<dbReference type="GO" id="GO:0004765">
    <property type="term" value="F:shikimate kinase activity"/>
    <property type="evidence" value="ECO:0007669"/>
    <property type="project" value="UniProtKB-UniRule"/>
</dbReference>
<dbReference type="GO" id="GO:0008652">
    <property type="term" value="P:amino acid biosynthetic process"/>
    <property type="evidence" value="ECO:0007669"/>
    <property type="project" value="UniProtKB-KW"/>
</dbReference>
<dbReference type="GO" id="GO:0009073">
    <property type="term" value="P:aromatic amino acid family biosynthetic process"/>
    <property type="evidence" value="ECO:0007669"/>
    <property type="project" value="UniProtKB-KW"/>
</dbReference>
<dbReference type="GO" id="GO:0009423">
    <property type="term" value="P:chorismate biosynthetic process"/>
    <property type="evidence" value="ECO:0007669"/>
    <property type="project" value="UniProtKB-UniRule"/>
</dbReference>
<dbReference type="CDD" id="cd00464">
    <property type="entry name" value="SK"/>
    <property type="match status" value="1"/>
</dbReference>
<dbReference type="FunFam" id="3.40.50.300:FF:002322">
    <property type="entry name" value="Shikimate kinase"/>
    <property type="match status" value="1"/>
</dbReference>
<dbReference type="Gene3D" id="3.40.50.300">
    <property type="entry name" value="P-loop containing nucleotide triphosphate hydrolases"/>
    <property type="match status" value="1"/>
</dbReference>
<dbReference type="HAMAP" id="MF_00109">
    <property type="entry name" value="Shikimate_kinase"/>
    <property type="match status" value="1"/>
</dbReference>
<dbReference type="InterPro" id="IPR027417">
    <property type="entry name" value="P-loop_NTPase"/>
</dbReference>
<dbReference type="InterPro" id="IPR031322">
    <property type="entry name" value="Shikimate/glucono_kinase"/>
</dbReference>
<dbReference type="InterPro" id="IPR000623">
    <property type="entry name" value="Shikimate_kinase/TSH1"/>
</dbReference>
<dbReference type="PANTHER" id="PTHR21087">
    <property type="entry name" value="SHIKIMATE KINASE"/>
    <property type="match status" value="1"/>
</dbReference>
<dbReference type="PANTHER" id="PTHR21087:SF16">
    <property type="entry name" value="SHIKIMATE KINASE 1, CHLOROPLASTIC"/>
    <property type="match status" value="1"/>
</dbReference>
<dbReference type="Pfam" id="PF01202">
    <property type="entry name" value="SKI"/>
    <property type="match status" value="1"/>
</dbReference>
<dbReference type="PIRSF" id="PIRSF000709">
    <property type="entry name" value="6PFK_2-Ptase"/>
    <property type="match status" value="1"/>
</dbReference>
<dbReference type="PRINTS" id="PR01100">
    <property type="entry name" value="SHIKIMTKNASE"/>
</dbReference>
<dbReference type="SUPFAM" id="SSF52540">
    <property type="entry name" value="P-loop containing nucleoside triphosphate hydrolases"/>
    <property type="match status" value="1"/>
</dbReference>
<sequence>MENIVLIGMPLSGKSTLGRELSKILKYDLIDTDTLIEEMEDKSIKEIFKIYGEDYFREKELEIINKLKKESNKVISTGGGLPIYNKNIYELKNIGFTVYLKVPLEELIKRMVKKEYDTRPLLKNNDTKFLEEMYKNRIEIYEKAHTIICNTNYEESLIKIVRAYKKWKGI</sequence>
<evidence type="ECO:0000255" key="1">
    <source>
        <dbReference type="HAMAP-Rule" id="MF_00109"/>
    </source>
</evidence>
<reference key="1">
    <citation type="journal article" date="2007" name="PLoS ONE">
        <title>Analysis of the neurotoxin complex genes in Clostridium botulinum A1-A4 and B1 strains: BoNT/A3, /Ba4 and /B1 clusters are located within plasmids.</title>
        <authorList>
            <person name="Smith T.J."/>
            <person name="Hill K.K."/>
            <person name="Foley B.T."/>
            <person name="Detter J.C."/>
            <person name="Munk A.C."/>
            <person name="Bruce D.C."/>
            <person name="Doggett N.A."/>
            <person name="Smith L.A."/>
            <person name="Marks J.D."/>
            <person name="Xie G."/>
            <person name="Brettin T.S."/>
        </authorList>
    </citation>
    <scope>NUCLEOTIDE SEQUENCE [LARGE SCALE GENOMIC DNA]</scope>
    <source>
        <strain>Okra / Type B1</strain>
    </source>
</reference>
<feature type="chain" id="PRO_1000094382" description="Shikimate kinase">
    <location>
        <begin position="1"/>
        <end position="170"/>
    </location>
</feature>
<feature type="binding site" evidence="1">
    <location>
        <begin position="11"/>
        <end position="16"/>
    </location>
    <ligand>
        <name>ATP</name>
        <dbReference type="ChEBI" id="CHEBI:30616"/>
    </ligand>
</feature>
<feature type="binding site" evidence="1">
    <location>
        <position position="15"/>
    </location>
    <ligand>
        <name>Mg(2+)</name>
        <dbReference type="ChEBI" id="CHEBI:18420"/>
    </ligand>
</feature>
<feature type="binding site" evidence="1">
    <location>
        <position position="33"/>
    </location>
    <ligand>
        <name>substrate</name>
    </ligand>
</feature>
<feature type="binding site" evidence="1">
    <location>
        <position position="57"/>
    </location>
    <ligand>
        <name>substrate</name>
    </ligand>
</feature>
<feature type="binding site" evidence="1">
    <location>
        <position position="79"/>
    </location>
    <ligand>
        <name>substrate</name>
    </ligand>
</feature>
<feature type="binding site" evidence="1">
    <location>
        <position position="119"/>
    </location>
    <ligand>
        <name>ATP</name>
        <dbReference type="ChEBI" id="CHEBI:30616"/>
    </ligand>
</feature>
<feature type="binding site" evidence="1">
    <location>
        <position position="137"/>
    </location>
    <ligand>
        <name>substrate</name>
    </ligand>
</feature>
<organism>
    <name type="scientific">Clostridium botulinum (strain Okra / Type B1)</name>
    <dbReference type="NCBI Taxonomy" id="498213"/>
    <lineage>
        <taxon>Bacteria</taxon>
        <taxon>Bacillati</taxon>
        <taxon>Bacillota</taxon>
        <taxon>Clostridia</taxon>
        <taxon>Eubacteriales</taxon>
        <taxon>Clostridiaceae</taxon>
        <taxon>Clostridium</taxon>
    </lineage>
</organism>
<accession>B1IMQ2</accession>
<gene>
    <name evidence="1" type="primary">aroK</name>
    <name type="ordered locus">CLD_2738</name>
</gene>
<proteinExistence type="inferred from homology"/>
<protein>
    <recommendedName>
        <fullName evidence="1">Shikimate kinase</fullName>
        <shortName evidence="1">SK</shortName>
        <ecNumber evidence="1">2.7.1.71</ecNumber>
    </recommendedName>
</protein>
<keyword id="KW-0028">Amino-acid biosynthesis</keyword>
<keyword id="KW-0057">Aromatic amino acid biosynthesis</keyword>
<keyword id="KW-0067">ATP-binding</keyword>
<keyword id="KW-0963">Cytoplasm</keyword>
<keyword id="KW-0418">Kinase</keyword>
<keyword id="KW-0460">Magnesium</keyword>
<keyword id="KW-0479">Metal-binding</keyword>
<keyword id="KW-0547">Nucleotide-binding</keyword>
<keyword id="KW-0808">Transferase</keyword>